<proteinExistence type="evidence at protein level"/>
<gene>
    <name type="primary">mtaC</name>
    <name type="ordered locus">Mbar_A0740</name>
</gene>
<protein>
    <recommendedName>
        <fullName>Methanol--corrinoid protein</fullName>
    </recommendedName>
    <alternativeName>
        <fullName>Methanol:corrinoid methyltransferase 1 subunit of 27 kDa</fullName>
        <shortName>MT1 subunit 27 kDa</shortName>
    </alternativeName>
</protein>
<accession>Q46EH4</accession>
<accession>P94920</accession>
<evidence type="ECO:0000255" key="1">
    <source>
        <dbReference type="PROSITE-ProRule" id="PRU00666"/>
    </source>
</evidence>
<evidence type="ECO:0000255" key="2">
    <source>
        <dbReference type="PROSITE-ProRule" id="PRU00667"/>
    </source>
</evidence>
<evidence type="ECO:0000269" key="3">
    <source>
    </source>
</evidence>
<evidence type="ECO:0000269" key="4">
    <source>
    </source>
</evidence>
<evidence type="ECO:0000269" key="5">
    <source>
    </source>
</evidence>
<evidence type="ECO:0000305" key="6"/>
<evidence type="ECO:0007829" key="7">
    <source>
        <dbReference type="PDB" id="2I2X"/>
    </source>
</evidence>
<name>MTAC_METBF</name>
<organism>
    <name type="scientific">Methanosarcina barkeri (strain Fusaro / DSM 804)</name>
    <dbReference type="NCBI Taxonomy" id="269797"/>
    <lineage>
        <taxon>Archaea</taxon>
        <taxon>Methanobacteriati</taxon>
        <taxon>Methanobacteriota</taxon>
        <taxon>Stenosarchaea group</taxon>
        <taxon>Methanomicrobia</taxon>
        <taxon>Methanosarcinales</taxon>
        <taxon>Methanosarcinaceae</taxon>
        <taxon>Methanosarcina</taxon>
    </lineage>
</organism>
<reference key="1">
    <citation type="journal article" date="1997" name="Eur. J. Biochem.">
        <title>Methanol:coenzyme M methyltransferase from Methanosarcina barkeri. Purification, properties and encoding genes of the corrinoid protein MT1.</title>
        <authorList>
            <person name="Sauer K."/>
            <person name="Harms U."/>
            <person name="Thauer R.K."/>
        </authorList>
    </citation>
    <scope>NUCLEOTIDE SEQUENCE [GENOMIC DNA]</scope>
    <scope>PROTEIN SEQUENCE OF 1-60</scope>
    <scope>FUNCTION</scope>
    <source>
        <strain>Fusaro / DSM 804</strain>
    </source>
</reference>
<reference key="2">
    <citation type="journal article" date="2006" name="J. Bacteriol.">
        <title>The Methanosarcina barkeri genome: comparative analysis with Methanosarcina acetivorans and Methanosarcina mazei reveals extensive rearrangement within methanosarcinal genomes.</title>
        <authorList>
            <person name="Maeder D.L."/>
            <person name="Anderson I."/>
            <person name="Brettin T.S."/>
            <person name="Bruce D.C."/>
            <person name="Gilna P."/>
            <person name="Han C.S."/>
            <person name="Lapidus A."/>
            <person name="Metcalf W.W."/>
            <person name="Saunders E."/>
            <person name="Tapia R."/>
            <person name="Sowers K.R."/>
        </authorList>
    </citation>
    <scope>NUCLEOTIDE SEQUENCE [LARGE SCALE GENOMIC DNA]</scope>
    <source>
        <strain>Fusaro / DSM 804</strain>
    </source>
</reference>
<reference key="3">
    <citation type="journal article" date="1984" name="J. Bacteriol.">
        <title>Purification and properties of methanol:5-hydroxybenzimidazolylcobamide methyltransferase from Methanosarcina barkeri.</title>
        <authorList>
            <person name="van der Meijden P."/>
            <person name="te Brommelstroet B.W."/>
            <person name="Poirot C.M."/>
            <person name="van der Drift C."/>
            <person name="Vogels G.D."/>
        </authorList>
    </citation>
    <scope>IDENTIFICATION</scope>
    <source>
        <strain>Fusaro / DSM 804</strain>
    </source>
</reference>
<reference key="4">
    <citation type="journal article" date="1997" name="Eur. J. Biochem.">
        <title>Methanol:coenzyme M methyltransferase from Methanosarcina barkeri. Zinc dependence and thermodynamics of the methanol:cob(I)alamin methyltransferase reaction.</title>
        <authorList>
            <person name="Sauer K."/>
            <person name="Thauer R.K."/>
        </authorList>
    </citation>
    <scope>IDENTIFICATION</scope>
    <source>
        <strain>Fusaro / DSM 804</strain>
    </source>
</reference>
<reference key="5">
    <citation type="journal article" date="1998" name="Eur. J. Biochem.">
        <title>Methanol:coenzyme M methyltransferase from Methanosarcina barkeri -- identification of the active-site histidine in the corrinoid-harboring subunit MtaC by site-directed mutagenesis.</title>
        <authorList>
            <person name="Sauer K."/>
            <person name="Thauer R.K."/>
        </authorList>
    </citation>
    <scope>COBALT-BINDING</scope>
    <scope>MUTAGENESIS OF HIS-129; HIS-136 AND 256-HIS--HIS-258</scope>
    <source>
        <strain>Fusaro / DSM 804</strain>
    </source>
</reference>
<reference key="6">
    <citation type="journal article" date="2006" name="Proc. Natl. Acad. Sci. U.S.A.">
        <title>Insight into the mechanism of biological methanol activation based on the crystal structure of the methanol-cobalamin methyltransferase complex.</title>
        <authorList>
            <person name="Hagemeier C.H."/>
            <person name="Krer M."/>
            <person name="Thauer R.K."/>
            <person name="Warkentin E."/>
            <person name="Ermler U."/>
        </authorList>
    </citation>
    <scope>X-RAY CRYSTALLOGRAPHY (2.50 ANGSTROMS) IN COMPLEX WITH MTAB</scope>
    <scope>INTERACTION WITH MTAB</scope>
    <scope>SUBUNIT</scope>
    <source>
        <strain>Fusaro / DSM 804</strain>
    </source>
</reference>
<keyword id="KW-0002">3D-structure</keyword>
<keyword id="KW-0170">Cobalt</keyword>
<keyword id="KW-0903">Direct protein sequencing</keyword>
<keyword id="KW-0479">Metal-binding</keyword>
<feature type="chain" id="PRO_0000418941" description="Methanol--corrinoid protein">
    <location>
        <begin position="1"/>
        <end position="258"/>
    </location>
</feature>
<feature type="domain" description="B12-binding N-terminal" evidence="2">
    <location>
        <begin position="30"/>
        <end position="124"/>
    </location>
</feature>
<feature type="domain" description="B12-binding" evidence="1">
    <location>
        <begin position="123"/>
        <end position="248"/>
    </location>
</feature>
<feature type="binding site" description="axial binding residue">
    <location>
        <position position="136"/>
    </location>
    <ligand>
        <name>methylcob(III)alamin</name>
        <dbReference type="ChEBI" id="CHEBI:28115"/>
    </ligand>
    <ligandPart>
        <name>Co</name>
        <dbReference type="ChEBI" id="CHEBI:27638"/>
    </ligandPart>
</feature>
<feature type="mutagenesis site" description="Does not affect cobalamin-binding." evidence="5">
    <original>H</original>
    <variation>K</variation>
    <location>
        <position position="129"/>
    </location>
</feature>
<feature type="mutagenesis site" description="Abolishes cobalamin-binding." evidence="5">
    <original>H</original>
    <variation>G</variation>
    <variation>K</variation>
    <location>
        <position position="136"/>
    </location>
</feature>
<feature type="mutagenesis site" description="Does not affect cobalamin-binding." evidence="5">
    <original>HKH</original>
    <variation>KKK</variation>
    <location>
        <begin position="256"/>
        <end position="258"/>
    </location>
</feature>
<feature type="sequence conflict" description="In Ref. 1; AA sequence." evidence="6" ref="1">
    <original>D</original>
    <variation>T</variation>
    <location>
        <position position="53"/>
    </location>
</feature>
<feature type="helix" evidence="7">
    <location>
        <begin position="6"/>
        <end position="12"/>
    </location>
</feature>
<feature type="helix" evidence="7">
    <location>
        <begin position="17"/>
        <end position="20"/>
    </location>
</feature>
<feature type="helix" evidence="7">
    <location>
        <begin position="26"/>
        <end position="33"/>
    </location>
</feature>
<feature type="helix" evidence="7">
    <location>
        <begin position="41"/>
        <end position="48"/>
    </location>
</feature>
<feature type="helix" evidence="7">
    <location>
        <begin position="52"/>
        <end position="65"/>
    </location>
</feature>
<feature type="turn" evidence="7">
    <location>
        <begin position="69"/>
        <end position="71"/>
    </location>
</feature>
<feature type="helix" evidence="7">
    <location>
        <begin position="72"/>
        <end position="75"/>
    </location>
</feature>
<feature type="helix" evidence="7">
    <location>
        <begin position="77"/>
        <end position="89"/>
    </location>
</feature>
<feature type="helix" evidence="7">
    <location>
        <begin position="95"/>
        <end position="113"/>
    </location>
</feature>
<feature type="turn" evidence="7">
    <location>
        <begin position="114"/>
        <end position="116"/>
    </location>
</feature>
<feature type="strand" evidence="7">
    <location>
        <begin position="125"/>
        <end position="130"/>
    </location>
</feature>
<feature type="helix" evidence="7">
    <location>
        <begin position="138"/>
        <end position="149"/>
    </location>
</feature>
<feature type="strand" evidence="7">
    <location>
        <begin position="153"/>
        <end position="160"/>
    </location>
</feature>
<feature type="helix" evidence="7">
    <location>
        <begin position="164"/>
        <end position="173"/>
    </location>
</feature>
<feature type="strand" evidence="7">
    <location>
        <begin position="176"/>
        <end position="181"/>
    </location>
</feature>
<feature type="turn" evidence="7">
    <location>
        <begin position="185"/>
        <end position="189"/>
    </location>
</feature>
<feature type="helix" evidence="7">
    <location>
        <begin position="190"/>
        <end position="199"/>
    </location>
</feature>
<feature type="turn" evidence="7">
    <location>
        <begin position="200"/>
        <end position="202"/>
    </location>
</feature>
<feature type="strand" evidence="7">
    <location>
        <begin position="207"/>
        <end position="211"/>
    </location>
</feature>
<feature type="helix" evidence="7">
    <location>
        <begin position="216"/>
        <end position="220"/>
    </location>
</feature>
<feature type="strand" evidence="7">
    <location>
        <begin position="225"/>
        <end position="227"/>
    </location>
</feature>
<feature type="helix" evidence="7">
    <location>
        <begin position="233"/>
        <end position="242"/>
    </location>
</feature>
<feature type="helix" evidence="7">
    <location>
        <begin position="248"/>
        <end position="255"/>
    </location>
</feature>
<dbReference type="EMBL" id="Y08310">
    <property type="protein sequence ID" value="CAA69619.1"/>
    <property type="molecule type" value="Genomic_DNA"/>
</dbReference>
<dbReference type="EMBL" id="CP000099">
    <property type="protein sequence ID" value="AAZ69718.1"/>
    <property type="molecule type" value="Genomic_DNA"/>
</dbReference>
<dbReference type="PDB" id="2I2X">
    <property type="method" value="X-ray"/>
    <property type="resolution" value="2.50 A"/>
    <property type="chains" value="B/D/F/H/J/L/N/P=1-258"/>
</dbReference>
<dbReference type="PDBsum" id="2I2X"/>
<dbReference type="SMR" id="Q46EH4"/>
<dbReference type="DIP" id="DIP-61321N"/>
<dbReference type="IntAct" id="Q46EH4">
    <property type="interactions" value="1"/>
</dbReference>
<dbReference type="STRING" id="269797.Mbar_A0740"/>
<dbReference type="PaxDb" id="269797-Mbar_A0740"/>
<dbReference type="GeneID" id="24821656"/>
<dbReference type="KEGG" id="mba:Mbar_A0740"/>
<dbReference type="eggNOG" id="arCOG02032">
    <property type="taxonomic scope" value="Archaea"/>
</dbReference>
<dbReference type="HOGENOM" id="CLU_082102_0_0_2"/>
<dbReference type="OrthoDB" id="134276at2157"/>
<dbReference type="BioCyc" id="MetaCyc:MTACMBARK-MONOMER"/>
<dbReference type="BRENDA" id="2.1.1.90">
    <property type="organism ID" value="3250"/>
</dbReference>
<dbReference type="EvolutionaryTrace" id="Q46EH4"/>
<dbReference type="GO" id="GO:0005829">
    <property type="term" value="C:cytosol"/>
    <property type="evidence" value="ECO:0007669"/>
    <property type="project" value="TreeGrafter"/>
</dbReference>
<dbReference type="GO" id="GO:0031419">
    <property type="term" value="F:cobalamin binding"/>
    <property type="evidence" value="ECO:0007669"/>
    <property type="project" value="InterPro"/>
</dbReference>
<dbReference type="GO" id="GO:0050897">
    <property type="term" value="F:cobalt ion binding"/>
    <property type="evidence" value="ECO:0007669"/>
    <property type="project" value="InterPro"/>
</dbReference>
<dbReference type="GO" id="GO:0008705">
    <property type="term" value="F:methionine synthase activity"/>
    <property type="evidence" value="ECO:0007669"/>
    <property type="project" value="TreeGrafter"/>
</dbReference>
<dbReference type="GO" id="GO:0050667">
    <property type="term" value="P:homocysteine metabolic process"/>
    <property type="evidence" value="ECO:0007669"/>
    <property type="project" value="TreeGrafter"/>
</dbReference>
<dbReference type="GO" id="GO:0015948">
    <property type="term" value="P:methanogenesis"/>
    <property type="evidence" value="ECO:0007669"/>
    <property type="project" value="InterPro"/>
</dbReference>
<dbReference type="GO" id="GO:0046653">
    <property type="term" value="P:tetrahydrofolate metabolic process"/>
    <property type="evidence" value="ECO:0007669"/>
    <property type="project" value="TreeGrafter"/>
</dbReference>
<dbReference type="CDD" id="cd02070">
    <property type="entry name" value="corrinoid_protein_B12-BD"/>
    <property type="match status" value="1"/>
</dbReference>
<dbReference type="FunFam" id="3.40.50.280:FF:000003">
    <property type="entry name" value="Dimethylamine methyltransferase corrinoid protein"/>
    <property type="match status" value="1"/>
</dbReference>
<dbReference type="Gene3D" id="3.40.50.280">
    <property type="entry name" value="Cobalamin-binding domain"/>
    <property type="match status" value="1"/>
</dbReference>
<dbReference type="Gene3D" id="1.10.1240.10">
    <property type="entry name" value="Methionine synthase domain"/>
    <property type="match status" value="1"/>
</dbReference>
<dbReference type="InterPro" id="IPR003759">
    <property type="entry name" value="Cbl-bd_cap"/>
</dbReference>
<dbReference type="InterPro" id="IPR006158">
    <property type="entry name" value="Cobalamin-bd"/>
</dbReference>
<dbReference type="InterPro" id="IPR036724">
    <property type="entry name" value="Cobalamin-bd_sf"/>
</dbReference>
<dbReference type="InterPro" id="IPR012741">
    <property type="entry name" value="Corrinoid_p"/>
</dbReference>
<dbReference type="InterPro" id="IPR050554">
    <property type="entry name" value="Met_Synthase/Corrinoid"/>
</dbReference>
<dbReference type="InterPro" id="IPR036594">
    <property type="entry name" value="Meth_synthase_dom"/>
</dbReference>
<dbReference type="NCBIfam" id="NF040655">
    <property type="entry name" value="MtaC_Meth"/>
    <property type="match status" value="1"/>
</dbReference>
<dbReference type="NCBIfam" id="TIGR02370">
    <property type="entry name" value="pyl_corrinoid"/>
    <property type="match status" value="1"/>
</dbReference>
<dbReference type="PANTHER" id="PTHR45833">
    <property type="entry name" value="METHIONINE SYNTHASE"/>
    <property type="match status" value="1"/>
</dbReference>
<dbReference type="PANTHER" id="PTHR45833:SF1">
    <property type="entry name" value="METHIONINE SYNTHASE"/>
    <property type="match status" value="1"/>
</dbReference>
<dbReference type="Pfam" id="PF02310">
    <property type="entry name" value="B12-binding"/>
    <property type="match status" value="1"/>
</dbReference>
<dbReference type="Pfam" id="PF02607">
    <property type="entry name" value="B12-binding_2"/>
    <property type="match status" value="1"/>
</dbReference>
<dbReference type="SMART" id="SM01018">
    <property type="entry name" value="B12-binding_2"/>
    <property type="match status" value="1"/>
</dbReference>
<dbReference type="SUPFAM" id="SSF52242">
    <property type="entry name" value="Cobalamin (vitamin B12)-binding domain"/>
    <property type="match status" value="1"/>
</dbReference>
<dbReference type="SUPFAM" id="SSF47644">
    <property type="entry name" value="Methionine synthase domain"/>
    <property type="match status" value="1"/>
</dbReference>
<dbReference type="PROSITE" id="PS51332">
    <property type="entry name" value="B12_BINDING"/>
    <property type="match status" value="1"/>
</dbReference>
<dbReference type="PROSITE" id="PS51337">
    <property type="entry name" value="B12_BINDING_NTER"/>
    <property type="match status" value="1"/>
</dbReference>
<comment type="function">
    <text evidence="4">Harbors a corrinoid prosthetic group and acts as a methyl group carrier in methanogenesis in the methanol pathway. The methyl group of methanol is first transferred to the corrinoid prosthetic group of MtaC in the cob(I)amide oxidation state. This reaction is mediated by MtaB. The methyl group from MtaC is then transferred to coenzyme M by MtaA.</text>
</comment>
<comment type="subunit">
    <text evidence="3">Heterotetramer, composed of 2 MtaB and 2 MtaC subunits.</text>
</comment>
<comment type="interaction">
    <interactant intactId="EBI-9021153">
        <id>Q46EH4</id>
    </interactant>
    <interactant intactId="EBI-9021160">
        <id>Q46EH3</id>
        <label>mtaB</label>
    </interactant>
    <organismsDiffer>false</organismsDiffer>
    <experiments>2</experiments>
</comment>
<comment type="similarity">
    <text evidence="6">Belongs to the methylamine corrinoid protein family.</text>
</comment>
<sequence length="258" mass="27857">MLDFTEASLKKVLTRYNVALEKALTPEEAAEELYPKDELIYPIAKAIFEGEEDDVVEGLQAAIEAGKDPIDLIDDALMVGMGVVIRLYDEGVIFLPNVMMSADAMLEGIEYCKENSGATPKTKGTVVCHVAEGDVHDIGKNIVTALLRANGYNVVDLGRDVPAEEVLAAVQKEKPIMLTGTALMTTTMYAFKEVNDMLLENGIKIPFACGGGAVNQDFVSQFALGVYGEEAADAPKIADAIIAGTTDVTELREKFHKH</sequence>